<name>GLPF_ECOLI</name>
<sequence length="281" mass="29780">MSQTSTLKGQCIAEFLGTGLLIFFGVGCVAALKVAGASFGQWEISVIWGLGVAMAIYLTAGVSGAHLNPAVTIALWLFACFDKRKVIPFIVSQVAGAFCAAALVYGLYYNLFFDFEQTHHIVRGSVESVDLAGTFSTYPNPHINFVQAFAVEMVITAILMGLILALTDDGNGVPRGPLAPLLIGLLIAVIGASMGPLTGFAMNPARDFGPKVFAWLAGWGNVAFTGGRDIPYFLVPLFGPIVGAIVGAFAYRKLIGRHLPCDICVVEEKETTTPSEQKASL</sequence>
<keyword id="KW-0002">3D-structure</keyword>
<keyword id="KW-0997">Cell inner membrane</keyword>
<keyword id="KW-1003">Cell membrane</keyword>
<keyword id="KW-0472">Membrane</keyword>
<keyword id="KW-1185">Reference proteome</keyword>
<keyword id="KW-0677">Repeat</keyword>
<keyword id="KW-0812">Transmembrane</keyword>
<keyword id="KW-1133">Transmembrane helix</keyword>
<keyword id="KW-0813">Transport</keyword>
<protein>
    <recommendedName>
        <fullName>Glycerol uptake facilitator protein</fullName>
    </recommendedName>
    <alternativeName>
        <fullName>Aquaglyceroporin</fullName>
    </alternativeName>
    <alternativeName>
        <fullName evidence="10">Glycerol facilitator</fullName>
    </alternativeName>
</protein>
<gene>
    <name evidence="10" type="primary">glpF</name>
    <name type="ordered locus">b3927</name>
    <name type="ordered locus">JW3898</name>
</gene>
<evidence type="ECO:0000269" key="1">
    <source>
    </source>
</evidence>
<evidence type="ECO:0000269" key="2">
    <source>
    </source>
</evidence>
<evidence type="ECO:0000269" key="3">
    <source>
    </source>
</evidence>
<evidence type="ECO:0000269" key="4">
    <source>
    </source>
</evidence>
<evidence type="ECO:0000269" key="5">
    <source>
    </source>
</evidence>
<evidence type="ECO:0000269" key="6">
    <source>
    </source>
</evidence>
<evidence type="ECO:0000269" key="7">
    <source>
    </source>
</evidence>
<evidence type="ECO:0000269" key="8">
    <source>
    </source>
</evidence>
<evidence type="ECO:0000269" key="9">
    <source>
    </source>
</evidence>
<evidence type="ECO:0000303" key="10">
    <source>
    </source>
</evidence>
<evidence type="ECO:0000305" key="11"/>
<evidence type="ECO:0000305" key="12">
    <source>
    </source>
</evidence>
<evidence type="ECO:0007744" key="13">
    <source>
        <dbReference type="PDB" id="1FX8"/>
    </source>
</evidence>
<evidence type="ECO:0007744" key="14">
    <source>
        <dbReference type="PDB" id="1LDA"/>
    </source>
</evidence>
<evidence type="ECO:0007744" key="15">
    <source>
        <dbReference type="PDB" id="1LDF"/>
    </source>
</evidence>
<evidence type="ECO:0007744" key="16">
    <source>
        <dbReference type="PDB" id="1LDI"/>
    </source>
</evidence>
<evidence type="ECO:0007829" key="17">
    <source>
        <dbReference type="PDB" id="1LDF"/>
    </source>
</evidence>
<evidence type="ECO:0007829" key="18">
    <source>
        <dbReference type="PDB" id="1LDI"/>
    </source>
</evidence>
<reference key="1">
    <citation type="journal article" date="1989" name="Nucleic Acids Res.">
        <title>Nucleotide sequence of the region encompassing the glpKF operon and its upstream region containing a bent DNA sequence of Escherichia coli.</title>
        <authorList>
            <person name="Muramatsu S."/>
            <person name="Mizuno T."/>
        </authorList>
    </citation>
    <scope>NUCLEOTIDE SEQUENCE [GENOMIC DNA]</scope>
    <source>
        <strain>K12</strain>
    </source>
</reference>
<reference key="2">
    <citation type="journal article" date="1992" name="J. Biol. Chem.">
        <title>Structure and regulation of the glpFK operon encoding glycerol diffusion facilitator and glycerol kinase of Escherichia coli K-12.</title>
        <authorList>
            <person name="Weissenborn D.L."/>
            <person name="Wittekindt N."/>
            <person name="Larson T.J."/>
        </authorList>
    </citation>
    <scope>NUCLEOTIDE SEQUENCE [GENOMIC DNA]</scope>
    <scope>INDUCTION</scope>
</reference>
<reference key="3">
    <citation type="submission" date="1994-08" db="EMBL/GenBank/DDBJ databases">
        <title>Escherichia coli HB101 nucleotide sequence of the glycerol diffusion facilitator protein gene.</title>
        <authorList>
            <person name="Chun B.W."/>
            <person name="Yang M.S."/>
        </authorList>
    </citation>
    <scope>NUCLEOTIDE SEQUENCE [GENOMIC DNA]</scope>
    <source>
        <strain>ATCC 33694 / HB101</strain>
    </source>
</reference>
<reference key="4">
    <citation type="journal article" date="1993" name="Nucleic Acids Res.">
        <title>Analysis of the Escherichia coli genome. III. DNA sequence of the region from 87.2 to 89.2 minutes.</title>
        <authorList>
            <person name="Plunkett G. III"/>
            <person name="Burland V."/>
            <person name="Daniels D.L."/>
            <person name="Blattner F.R."/>
        </authorList>
    </citation>
    <scope>NUCLEOTIDE SEQUENCE [LARGE SCALE GENOMIC DNA]</scope>
    <source>
        <strain>K12 / MG1655 / ATCC 47076</strain>
    </source>
</reference>
<reference key="5">
    <citation type="journal article" date="1997" name="Science">
        <title>The complete genome sequence of Escherichia coli K-12.</title>
        <authorList>
            <person name="Blattner F.R."/>
            <person name="Plunkett G. III"/>
            <person name="Bloch C.A."/>
            <person name="Perna N.T."/>
            <person name="Burland V."/>
            <person name="Riley M."/>
            <person name="Collado-Vides J."/>
            <person name="Glasner J.D."/>
            <person name="Rode C.K."/>
            <person name="Mayhew G.F."/>
            <person name="Gregor J."/>
            <person name="Davis N.W."/>
            <person name="Kirkpatrick H.A."/>
            <person name="Goeden M.A."/>
            <person name="Rose D.J."/>
            <person name="Mau B."/>
            <person name="Shao Y."/>
        </authorList>
    </citation>
    <scope>NUCLEOTIDE SEQUENCE [LARGE SCALE GENOMIC DNA]</scope>
    <source>
        <strain>K12 / MG1655 / ATCC 47076</strain>
    </source>
</reference>
<reference key="6">
    <citation type="journal article" date="2006" name="Mol. Syst. Biol.">
        <title>Highly accurate genome sequences of Escherichia coli K-12 strains MG1655 and W3110.</title>
        <authorList>
            <person name="Hayashi K."/>
            <person name="Morooka N."/>
            <person name="Yamamoto Y."/>
            <person name="Fujita K."/>
            <person name="Isono K."/>
            <person name="Choi S."/>
            <person name="Ohtsubo E."/>
            <person name="Baba T."/>
            <person name="Wanner B.L."/>
            <person name="Mori H."/>
            <person name="Horiuchi T."/>
        </authorList>
    </citation>
    <scope>NUCLEOTIDE SEQUENCE [LARGE SCALE GENOMIC DNA]</scope>
    <source>
        <strain>K12 / W3110 / ATCC 27325 / DSM 5911</strain>
    </source>
</reference>
<reference key="7">
    <citation type="journal article" date="1980" name="J. Bacteriol.">
        <title>Substrate specificity and transport properties of the glycerol facilitator of Escherichia coli.</title>
        <authorList>
            <person name="Heller K.B."/>
            <person name="Lin E.C."/>
            <person name="Wilson T.H."/>
        </authorList>
    </citation>
    <scope>FUNCTION</scope>
    <scope>SUBSTRATE SPECIFICITY</scope>
    <scope>CATALYTIC ACTIVITY</scope>
</reference>
<reference key="8">
    <citation type="journal article" date="1994" name="J. Biol. Chem.">
        <title>Functional characterization of the Escherichia coli glycerol facilitator, GlpF, in Xenopus oocytes.</title>
        <authorList>
            <person name="Maurel C."/>
            <person name="Reizer J."/>
            <person name="Schroeder J.I."/>
            <person name="Chrispeels M.J."/>
            <person name="Saier M.H. Jr."/>
        </authorList>
    </citation>
    <scope>FUNCTION</scope>
    <scope>CATALYTIC ACTIVITY</scope>
    <scope>ACTIVITY REGULATION</scope>
</reference>
<reference key="9">
    <citation type="journal article" date="1997" name="J. Bacteriol.">
        <title>Antimonite is accumulated by the glycerol facilitator GlpF in Escherichia coli.</title>
        <authorList>
            <person name="Sanders O.I."/>
            <person name="Rensing C."/>
            <person name="Kuroda M."/>
            <person name="Mitra B."/>
            <person name="Rosen B.P."/>
        </authorList>
    </citation>
    <scope>FUNCTION</scope>
    <scope>DISRUPTION PHENOTYPE</scope>
</reference>
<reference key="10">
    <citation type="journal article" date="2001" name="Proc. Natl. Acad. Sci. U.S.A.">
        <title>Reconstitution and functional comparison of purified GlpF and AqpZ, the glycerol and water channels from Escherichia coli.</title>
        <authorList>
            <person name="Borgnia M.J."/>
            <person name="Agre P."/>
        </authorList>
    </citation>
    <scope>FUNCTION</scope>
    <scope>CATALYTIC ACTIVITY</scope>
    <scope>SUBUNITS</scope>
    <scope>MUTAGENESIS OF 236-PRO-LEU-237</scope>
</reference>
<reference key="11">
    <citation type="journal article" date="2004" name="J. Biol. Chem.">
        <title>As(III) and Sb(III) uptake by GlpF and efflux by ArsB in Escherichia coli.</title>
        <authorList>
            <person name="Meng Y.L."/>
            <person name="Liu Z."/>
            <person name="Rosen B.P."/>
        </authorList>
    </citation>
    <scope>FUNCTION</scope>
    <scope>DISRUPTION PHENOTYPE</scope>
</reference>
<reference key="12">
    <citation type="journal article" date="2005" name="Science">
        <title>Global topology analysis of the Escherichia coli inner membrane proteome.</title>
        <authorList>
            <person name="Daley D.O."/>
            <person name="Rapp M."/>
            <person name="Granseth E."/>
            <person name="Melen K."/>
            <person name="Drew D."/>
            <person name="von Heijne G."/>
        </authorList>
    </citation>
    <scope>SUBCELLULAR LOCATION</scope>
    <source>
        <strain>K12 / MG1655 / ATCC 47076</strain>
    </source>
</reference>
<reference key="13">
    <citation type="journal article" date="2000" name="Nat. Struct. Biol.">
        <title>Fraternal twins: AQP1 and GlpF.</title>
        <authorList>
            <person name="Unger V.M."/>
        </authorList>
    </citation>
    <scope>REVIEW ON THE MEMBRANE STRUCTURE</scope>
</reference>
<reference evidence="13" key="14">
    <citation type="journal article" date="2000" name="Science">
        <title>Structure of a glycerol-conducting channel and the basis for its selectivity.</title>
        <authorList>
            <person name="Fu D."/>
            <person name="Libson A."/>
            <person name="Miercke L.J."/>
            <person name="Weitzman C."/>
            <person name="Nollert P."/>
            <person name="Krucinski J."/>
            <person name="Stroud R.M."/>
        </authorList>
    </citation>
    <scope>X-RAY CRYSTALLOGRAPHY (2.2 ANGSTROMS) IN COMPLEX WITH GLYCEROL</scope>
    <scope>FUNCTION</scope>
    <scope>CATALYTIC ACTIVITY</scope>
    <scope>SUBUNIT</scope>
    <scope>SUBCELLULAR LOCATION</scope>
    <scope>TOPOLOGY</scope>
</reference>
<reference evidence="14 15 16" key="15">
    <citation type="journal article" date="2002" name="Science">
        <title>Control of the selectivity of the aquaporin water channel family by global orientational tuning.</title>
        <authorList>
            <person name="Tajkhorshid E."/>
            <person name="Nollert P."/>
            <person name="Jensen M.O."/>
            <person name="Miercke L.J."/>
            <person name="O'Connell J.D. III"/>
            <person name="Stroud R.M."/>
            <person name="Schulten K."/>
        </authorList>
    </citation>
    <scope>X-RAY CRYSTALLOGRAPHY (2.10 ANGSTROMS) OF WILD-TYPE AND OF MUTANT PHE-48/THR-200 IN COMPLEX WITH GLYCEROL</scope>
    <scope>SELECTIVITY OF THE WATER CHANNEL</scope>
    <scope>SUBCELLULAR LOCATION</scope>
    <scope>TOPOLOGY</scope>
</reference>
<proteinExistence type="evidence at protein level"/>
<comment type="function">
    <text evidence="1 2 5 7 8 9">Mediates glycerol diffusion across the cytoplasmic membrane via a pore-type mechanism (PubMed:11039922, PubMed:11226336, PubMed:6998951, PubMed:7512955). Is highly permeable to glycerol, but less well permeated by water (PubMed:11226336). Does not transport ions (PubMed:7512955). It may also have limited permeability to various other substrates, including xylitol, erythritol, D-arabitol, L-arabitol, ribitol, D-galactitol, D-mannitol, D-sorbitol, urea, glycine, D/L-glyceraldehyde and the trivalent inorganic forms of arsenic and antimony (PubMed:14970228, PubMed:6998951, PubMed:9150238).</text>
</comment>
<comment type="catalytic activity">
    <reaction evidence="1 2 7 8">
        <text>glycerol(in) = glycerol(out)</text>
        <dbReference type="Rhea" id="RHEA:29675"/>
        <dbReference type="ChEBI" id="CHEBI:17754"/>
    </reaction>
</comment>
<comment type="activity regulation">
    <text evidence="8">Transport of glycerol is blocked by mercuric ions (Hg(2+)) but not N-ethylmaleimide.</text>
</comment>
<comment type="subunit">
    <text evidence="1 2">Homotetramer (PubMed:11039922, PubMed:11226336). Exists in multiple oligomeric states (PubMed:11226336). Is predominantly disassociated in the less dense fractions (PubMed:11226336). Tetramers are stabilized while in the membrane and during affinity purification (PubMed:11226336).</text>
</comment>
<comment type="subcellular location">
    <subcellularLocation>
        <location evidence="1 3 6">Cell inner membrane</location>
        <topology evidence="1 3">Multi-pass membrane protein</topology>
    </subcellularLocation>
</comment>
<comment type="induction">
    <text evidence="4">Expression is regulated by the HTH-type transcriptional regulator GlpR and by the cAMP-cAMP receptor protein (CRP) complex.</text>
</comment>
<comment type="domain">
    <text evidence="11">Aquaporins contain two tandem repeats each containing three membrane-spanning domains and a pore-forming loop with the signature motif Asn-Pro-Ala (NPA).</text>
</comment>
<comment type="disruption phenotype">
    <text evidence="5 9">Mutant grows on glucose but not on glycerol (PubMed:9150238). Disruption of the gene greatly reduces the level of uptake of both arsenite and antimonite (PubMed:14970228, PubMed:9150238).</text>
</comment>
<comment type="miscellaneous">
    <text evidence="3">The remarkable property of effective water conductance combined with a strict exclusion of all ions including protons is mediated by two conserved asparagines which force a central water molecule to serve strictly as a hydrogen bond donor to its neighboring water molecules. Assisted by the electrostatic potential generated by two half-membrane spanning loops, this dictates opposite orientations of water molecules in the two halves of the channel, and thus prevents the formation of a 'proton wire', while permitting rapid water diffusion.</text>
</comment>
<comment type="similarity">
    <text evidence="11">Belongs to the MIP/aquaporin (TC 1.A.8) family.</text>
</comment>
<organism>
    <name type="scientific">Escherichia coli (strain K12)</name>
    <dbReference type="NCBI Taxonomy" id="83333"/>
    <lineage>
        <taxon>Bacteria</taxon>
        <taxon>Pseudomonadati</taxon>
        <taxon>Pseudomonadota</taxon>
        <taxon>Gammaproteobacteria</taxon>
        <taxon>Enterobacterales</taxon>
        <taxon>Enterobacteriaceae</taxon>
        <taxon>Escherichia</taxon>
    </lineage>
</organism>
<accession>P0AER0</accession>
<accession>P11244</accession>
<accession>Q2M8M3</accession>
<accession>Q46727</accession>
<feature type="chain" id="PRO_0000064080" description="Glycerol uptake facilitator protein">
    <location>
        <begin position="1"/>
        <end position="281"/>
    </location>
</feature>
<feature type="topological domain" description="Cytoplasmic" evidence="1">
    <location>
        <begin position="1"/>
        <end position="5"/>
    </location>
</feature>
<feature type="transmembrane region" description="Helical; Name=M1" evidence="1">
    <location>
        <begin position="6"/>
        <end position="34"/>
    </location>
</feature>
<feature type="topological domain" description="Periplasmic" evidence="1">
    <location>
        <begin position="35"/>
        <end position="39"/>
    </location>
</feature>
<feature type="transmembrane region" description="Helical; Name=M2" evidence="1">
    <location>
        <begin position="40"/>
        <end position="60"/>
    </location>
</feature>
<feature type="topological domain" description="Cytoplasmic" evidence="1">
    <location>
        <begin position="61"/>
        <end position="63"/>
    </location>
</feature>
<feature type="intramembrane region" evidence="1">
    <location>
        <begin position="64"/>
        <end position="67"/>
    </location>
</feature>
<feature type="intramembrane region" description="Helical; Name=M3" evidence="1">
    <location>
        <begin position="68"/>
        <end position="78"/>
    </location>
</feature>
<feature type="topological domain" description="Cytoplasmic" evidence="1">
    <location>
        <begin position="79"/>
        <end position="84"/>
    </location>
</feature>
<feature type="transmembrane region" description="Helical; Name=M4" evidence="1">
    <location>
        <begin position="85"/>
        <end position="108"/>
    </location>
</feature>
<feature type="topological domain" description="Periplasmic" evidence="1">
    <location>
        <begin position="109"/>
        <end position="143"/>
    </location>
</feature>
<feature type="transmembrane region" description="Helical; Name=M5" evidence="1">
    <location>
        <begin position="144"/>
        <end position="169"/>
    </location>
</feature>
<feature type="topological domain" description="Cytoplasmic" evidence="1">
    <location>
        <begin position="170"/>
        <end position="177"/>
    </location>
</feature>
<feature type="transmembrane region" description="Helical; Name=M6" evidence="1">
    <location>
        <begin position="178"/>
        <end position="194"/>
    </location>
</feature>
<feature type="topological domain" description="Periplasmic" evidence="1">
    <location>
        <begin position="195"/>
        <end position="198"/>
    </location>
</feature>
<feature type="intramembrane region" evidence="1">
    <location>
        <begin position="199"/>
        <end position="202"/>
    </location>
</feature>
<feature type="intramembrane region" description="Helical; Name=M7" evidence="1">
    <location>
        <begin position="203"/>
        <end position="216"/>
    </location>
</feature>
<feature type="topological domain" description="Periplasmic" evidence="1">
    <location>
        <begin position="217"/>
        <end position="231"/>
    </location>
</feature>
<feature type="transmembrane region" description="Helical; Name=M8" evidence="1">
    <location>
        <begin position="232"/>
        <end position="254"/>
    </location>
</feature>
<feature type="topological domain" description="Cytoplasmic" evidence="1">
    <location>
        <begin position="255"/>
        <end position="281"/>
    </location>
</feature>
<feature type="short sequence motif" description="NPA 1" evidence="11">
    <location>
        <begin position="68"/>
        <end position="70"/>
    </location>
</feature>
<feature type="short sequence motif" description="NPA 2" evidence="11">
    <location>
        <begin position="203"/>
        <end position="205"/>
    </location>
</feature>
<feature type="binding site" evidence="1 3 13 15">
    <location>
        <begin position="66"/>
        <end position="68"/>
    </location>
    <ligand>
        <name>glycerol</name>
        <dbReference type="ChEBI" id="CHEBI:17754"/>
        <label>1</label>
    </ligand>
</feature>
<feature type="binding site" evidence="1 3 13">
    <location>
        <position position="138"/>
    </location>
    <ligand>
        <name>glycerol</name>
        <dbReference type="ChEBI" id="CHEBI:17754"/>
        <label>2</label>
    </ligand>
</feature>
<feature type="binding site" evidence="1 13">
    <location>
        <begin position="199"/>
        <end position="201"/>
    </location>
    <ligand>
        <name>glycerol</name>
        <dbReference type="ChEBI" id="CHEBI:17754"/>
        <label>3</label>
    </ligand>
</feature>
<feature type="binding site" evidence="1 3 13 15">
    <location>
        <position position="203"/>
    </location>
    <ligand>
        <name>glycerol</name>
        <dbReference type="ChEBI" id="CHEBI:17754"/>
        <label>1</label>
    </ligand>
</feature>
<feature type="binding site" evidence="1 13">
    <location>
        <position position="206"/>
    </location>
    <ligand>
        <name>glycerol</name>
        <dbReference type="ChEBI" id="CHEBI:17754"/>
        <label>3</label>
    </ligand>
</feature>
<feature type="site" description="Substrate discrimination" evidence="12">
    <location>
        <position position="48"/>
    </location>
</feature>
<feature type="site" description="Substrate discrimination" evidence="12">
    <location>
        <position position="200"/>
    </location>
</feature>
<feature type="site" description="Substrate discrimination" evidence="12">
    <location>
        <position position="206"/>
    </location>
</feature>
<feature type="sequence variant" description="In strain: HB101.">
    <original>V</original>
    <variation>I</variation>
    <location>
        <position position="126"/>
    </location>
</feature>
<feature type="sequence variant" description="In strain: HB101.">
    <original>M</original>
    <variation>I</variation>
    <location>
        <position position="160"/>
    </location>
</feature>
<feature type="sequence variant" description="In strain: HB101.">
    <original>G</original>
    <variation>S</variation>
    <location>
        <position position="239"/>
    </location>
</feature>
<feature type="mutagenesis site" description="No detectable water or glycerol permeability." evidence="2">
    <original>PL</original>
    <variation>FW</variation>
    <location>
        <begin position="236"/>
        <end position="237"/>
    </location>
</feature>
<feature type="sequence conflict" description="In Ref. 1; CAA33153." evidence="11" ref="1">
    <original>D</original>
    <variation>V</variation>
    <location>
        <position position="168"/>
    </location>
</feature>
<feature type="helix" evidence="17">
    <location>
        <begin position="7"/>
        <end position="34"/>
    </location>
</feature>
<feature type="helix" evidence="17">
    <location>
        <begin position="41"/>
        <end position="63"/>
    </location>
</feature>
<feature type="helix" evidence="17">
    <location>
        <begin position="69"/>
        <end position="78"/>
    </location>
</feature>
<feature type="turn" evidence="17">
    <location>
        <begin position="83"/>
        <end position="85"/>
    </location>
</feature>
<feature type="helix" evidence="17">
    <location>
        <begin position="86"/>
        <end position="118"/>
    </location>
</feature>
<feature type="helix" evidence="17">
    <location>
        <begin position="126"/>
        <end position="128"/>
    </location>
</feature>
<feature type="helix" evidence="17">
    <location>
        <begin position="129"/>
        <end position="132"/>
    </location>
</feature>
<feature type="turn" evidence="17">
    <location>
        <begin position="133"/>
        <end position="135"/>
    </location>
</feature>
<feature type="helix" evidence="17">
    <location>
        <begin position="145"/>
        <end position="167"/>
    </location>
</feature>
<feature type="strand" evidence="17">
    <location>
        <begin position="171"/>
        <end position="173"/>
    </location>
</feature>
<feature type="helix" evidence="17">
    <location>
        <begin position="176"/>
        <end position="178"/>
    </location>
</feature>
<feature type="helix" evidence="17">
    <location>
        <begin position="179"/>
        <end position="198"/>
    </location>
</feature>
<feature type="helix" evidence="17">
    <location>
        <begin position="204"/>
        <end position="216"/>
    </location>
</feature>
<feature type="turn" evidence="17">
    <location>
        <begin position="217"/>
        <end position="221"/>
    </location>
</feature>
<feature type="helix" evidence="17">
    <location>
        <begin position="222"/>
        <end position="225"/>
    </location>
</feature>
<feature type="strand" evidence="18">
    <location>
        <begin position="226"/>
        <end position="230"/>
    </location>
</feature>
<feature type="helix" evidence="17">
    <location>
        <begin position="234"/>
        <end position="254"/>
    </location>
</feature>
<feature type="helix" evidence="17">
    <location>
        <begin position="256"/>
        <end position="258"/>
    </location>
</feature>
<dbReference type="EMBL" id="X15054">
    <property type="protein sequence ID" value="CAA33153.1"/>
    <property type="molecule type" value="Genomic_DNA"/>
</dbReference>
<dbReference type="EMBL" id="M55990">
    <property type="protein sequence ID" value="AAA23886.1"/>
    <property type="molecule type" value="Genomic_DNA"/>
</dbReference>
<dbReference type="EMBL" id="L19201">
    <property type="protein sequence ID" value="AAB03059.1"/>
    <property type="molecule type" value="Genomic_DNA"/>
</dbReference>
<dbReference type="EMBL" id="U00096">
    <property type="protein sequence ID" value="AAC76909.1"/>
    <property type="molecule type" value="Genomic_DNA"/>
</dbReference>
<dbReference type="EMBL" id="AP009048">
    <property type="protein sequence ID" value="BAE77383.1"/>
    <property type="molecule type" value="Genomic_DNA"/>
</dbReference>
<dbReference type="EMBL" id="U13915">
    <property type="protein sequence ID" value="AAA21363.1"/>
    <property type="molecule type" value="Genomic_DNA"/>
</dbReference>
<dbReference type="PIR" id="A42157">
    <property type="entry name" value="XMECGF"/>
</dbReference>
<dbReference type="RefSeq" id="NP_418362.1">
    <property type="nucleotide sequence ID" value="NC_000913.3"/>
</dbReference>
<dbReference type="RefSeq" id="WP_000084268.1">
    <property type="nucleotide sequence ID" value="NZ_STEB01000017.1"/>
</dbReference>
<dbReference type="PDB" id="1FX8">
    <property type="method" value="X-ray"/>
    <property type="resolution" value="2.20 A"/>
    <property type="chains" value="A=1-281"/>
</dbReference>
<dbReference type="PDB" id="1LDA">
    <property type="method" value="X-ray"/>
    <property type="resolution" value="2.80 A"/>
    <property type="chains" value="A=1-281"/>
</dbReference>
<dbReference type="PDB" id="1LDF">
    <property type="method" value="X-ray"/>
    <property type="resolution" value="2.10 A"/>
    <property type="chains" value="A=1-281"/>
</dbReference>
<dbReference type="PDB" id="1LDI">
    <property type="method" value="X-ray"/>
    <property type="resolution" value="2.70 A"/>
    <property type="chains" value="A=1-281"/>
</dbReference>
<dbReference type="PDBsum" id="1FX8"/>
<dbReference type="PDBsum" id="1LDA"/>
<dbReference type="PDBsum" id="1LDF"/>
<dbReference type="PDBsum" id="1LDI"/>
<dbReference type="SMR" id="P0AER0"/>
<dbReference type="BioGRID" id="4263410">
    <property type="interactions" value="234"/>
</dbReference>
<dbReference type="DIP" id="DIP-47976N"/>
<dbReference type="FunCoup" id="P0AER0">
    <property type="interactions" value="195"/>
</dbReference>
<dbReference type="IntAct" id="P0AER0">
    <property type="interactions" value="1"/>
</dbReference>
<dbReference type="STRING" id="511145.b3927"/>
<dbReference type="DrugBank" id="DB09462">
    <property type="generic name" value="Glycerin"/>
</dbReference>
<dbReference type="TCDB" id="1.A.8.1.1">
    <property type="family name" value="the major intrinsic protein (mip) family"/>
</dbReference>
<dbReference type="PaxDb" id="511145-b3927"/>
<dbReference type="EnsemblBacteria" id="AAC76909">
    <property type="protein sequence ID" value="AAC76909"/>
    <property type="gene ID" value="b3927"/>
</dbReference>
<dbReference type="GeneID" id="93777971"/>
<dbReference type="GeneID" id="948422"/>
<dbReference type="KEGG" id="ecj:JW3898"/>
<dbReference type="KEGG" id="eco:b3927"/>
<dbReference type="KEGG" id="ecoc:C3026_21225"/>
<dbReference type="PATRIC" id="fig|1411691.4.peg.2778"/>
<dbReference type="EchoBASE" id="EB0391"/>
<dbReference type="eggNOG" id="COG0580">
    <property type="taxonomic scope" value="Bacteria"/>
</dbReference>
<dbReference type="HOGENOM" id="CLU_020019_9_3_6"/>
<dbReference type="InParanoid" id="P0AER0"/>
<dbReference type="OMA" id="WGFAVLT"/>
<dbReference type="OrthoDB" id="9807293at2"/>
<dbReference type="PhylomeDB" id="P0AER0"/>
<dbReference type="BioCyc" id="EcoCyc:GLPF-MONOMER"/>
<dbReference type="BioCyc" id="MetaCyc:GLPF-MONOMER"/>
<dbReference type="EvolutionaryTrace" id="P0AER0"/>
<dbReference type="PRO" id="PR:P0AER0"/>
<dbReference type="Proteomes" id="UP000000625">
    <property type="component" value="Chromosome"/>
</dbReference>
<dbReference type="GO" id="GO:0005886">
    <property type="term" value="C:plasma membrane"/>
    <property type="evidence" value="ECO:0000314"/>
    <property type="project" value="UniProtKB"/>
</dbReference>
<dbReference type="GO" id="GO:0015254">
    <property type="term" value="F:glycerol channel activity"/>
    <property type="evidence" value="ECO:0000314"/>
    <property type="project" value="EcoCyc"/>
</dbReference>
<dbReference type="GO" id="GO:0015168">
    <property type="term" value="F:glycerol transmembrane transporter activity"/>
    <property type="evidence" value="ECO:0000314"/>
    <property type="project" value="UniProtKB"/>
</dbReference>
<dbReference type="GO" id="GO:0071288">
    <property type="term" value="P:cellular response to mercury ion"/>
    <property type="evidence" value="ECO:0000314"/>
    <property type="project" value="UniProtKB"/>
</dbReference>
<dbReference type="GO" id="GO:0015793">
    <property type="term" value="P:glycerol transmembrane transport"/>
    <property type="evidence" value="ECO:0000314"/>
    <property type="project" value="UniProtKB"/>
</dbReference>
<dbReference type="CDD" id="cd00333">
    <property type="entry name" value="MIP"/>
    <property type="match status" value="1"/>
</dbReference>
<dbReference type="FunFam" id="1.20.1080.10:FF:000004">
    <property type="entry name" value="Glycerol facilitator"/>
    <property type="match status" value="1"/>
</dbReference>
<dbReference type="Gene3D" id="1.20.1080.10">
    <property type="entry name" value="Glycerol uptake facilitator protein"/>
    <property type="match status" value="1"/>
</dbReference>
<dbReference type="InterPro" id="IPR023271">
    <property type="entry name" value="Aquaporin-like"/>
</dbReference>
<dbReference type="InterPro" id="IPR000425">
    <property type="entry name" value="MIP"/>
</dbReference>
<dbReference type="InterPro" id="IPR050363">
    <property type="entry name" value="MIP/Aquaporin"/>
</dbReference>
<dbReference type="InterPro" id="IPR022357">
    <property type="entry name" value="MIP_CS"/>
</dbReference>
<dbReference type="NCBIfam" id="TIGR00861">
    <property type="entry name" value="MIP"/>
    <property type="match status" value="1"/>
</dbReference>
<dbReference type="PANTHER" id="PTHR43829">
    <property type="entry name" value="AQUAPORIN OR AQUAGLYCEROPORIN RELATED"/>
    <property type="match status" value="1"/>
</dbReference>
<dbReference type="PANTHER" id="PTHR43829:SF9">
    <property type="entry name" value="AQUAPORIN-9"/>
    <property type="match status" value="1"/>
</dbReference>
<dbReference type="Pfam" id="PF00230">
    <property type="entry name" value="MIP"/>
    <property type="match status" value="1"/>
</dbReference>
<dbReference type="PRINTS" id="PR00783">
    <property type="entry name" value="MINTRINSICP"/>
</dbReference>
<dbReference type="SUPFAM" id="SSF81338">
    <property type="entry name" value="Aquaporin-like"/>
    <property type="match status" value="1"/>
</dbReference>
<dbReference type="PROSITE" id="PS00221">
    <property type="entry name" value="MIP"/>
    <property type="match status" value="1"/>
</dbReference>